<evidence type="ECO:0000255" key="1">
    <source>
        <dbReference type="HAMAP-Rule" id="MF_01694"/>
    </source>
</evidence>
<evidence type="ECO:0000255" key="2">
    <source>
        <dbReference type="PROSITE-ProRule" id="PRU01266"/>
    </source>
</evidence>
<accession>P19206</accession>
<gene>
    <name evidence="1" type="primary">bioB</name>
</gene>
<feature type="chain" id="PRO_0000185545" description="Biotin synthase">
    <location>
        <begin position="1"/>
        <end position="332"/>
    </location>
</feature>
<feature type="domain" description="Radical SAM core" evidence="2">
    <location>
        <begin position="46"/>
        <end position="275"/>
    </location>
</feature>
<feature type="binding site" evidence="1">
    <location>
        <position position="64"/>
    </location>
    <ligand>
        <name>[4Fe-4S] cluster</name>
        <dbReference type="ChEBI" id="CHEBI:49883"/>
        <note>4Fe-4S-S-AdoMet</note>
    </ligand>
</feature>
<feature type="binding site" evidence="1">
    <location>
        <position position="68"/>
    </location>
    <ligand>
        <name>[4Fe-4S] cluster</name>
        <dbReference type="ChEBI" id="CHEBI:49883"/>
        <note>4Fe-4S-S-AdoMet</note>
    </ligand>
</feature>
<feature type="binding site" evidence="1">
    <location>
        <position position="71"/>
    </location>
    <ligand>
        <name>[4Fe-4S] cluster</name>
        <dbReference type="ChEBI" id="CHEBI:49883"/>
        <note>4Fe-4S-S-AdoMet</note>
    </ligand>
</feature>
<feature type="binding site" evidence="1">
    <location>
        <position position="108"/>
    </location>
    <ligand>
        <name>[2Fe-2S] cluster</name>
        <dbReference type="ChEBI" id="CHEBI:190135"/>
    </ligand>
</feature>
<feature type="binding site" evidence="1">
    <location>
        <position position="140"/>
    </location>
    <ligand>
        <name>[2Fe-2S] cluster</name>
        <dbReference type="ChEBI" id="CHEBI:190135"/>
    </ligand>
</feature>
<feature type="binding site" evidence="1">
    <location>
        <position position="200"/>
    </location>
    <ligand>
        <name>[2Fe-2S] cluster</name>
        <dbReference type="ChEBI" id="CHEBI:190135"/>
    </ligand>
</feature>
<feature type="binding site" evidence="1">
    <location>
        <position position="270"/>
    </location>
    <ligand>
        <name>[2Fe-2S] cluster</name>
        <dbReference type="ChEBI" id="CHEBI:190135"/>
    </ligand>
</feature>
<comment type="function">
    <text evidence="1">Catalyzes the conversion of dethiobiotin (DTB) to biotin by the insertion of a sulfur atom into dethiobiotin via a radical-based mechanism.</text>
</comment>
<comment type="catalytic activity">
    <reaction evidence="1">
        <text>(4R,5S)-dethiobiotin + (sulfur carrier)-SH + 2 reduced [2Fe-2S]-[ferredoxin] + 2 S-adenosyl-L-methionine = (sulfur carrier)-H + biotin + 2 5'-deoxyadenosine + 2 L-methionine + 2 oxidized [2Fe-2S]-[ferredoxin]</text>
        <dbReference type="Rhea" id="RHEA:22060"/>
        <dbReference type="Rhea" id="RHEA-COMP:10000"/>
        <dbReference type="Rhea" id="RHEA-COMP:10001"/>
        <dbReference type="Rhea" id="RHEA-COMP:14737"/>
        <dbReference type="Rhea" id="RHEA-COMP:14739"/>
        <dbReference type="ChEBI" id="CHEBI:17319"/>
        <dbReference type="ChEBI" id="CHEBI:29917"/>
        <dbReference type="ChEBI" id="CHEBI:33737"/>
        <dbReference type="ChEBI" id="CHEBI:33738"/>
        <dbReference type="ChEBI" id="CHEBI:57586"/>
        <dbReference type="ChEBI" id="CHEBI:57844"/>
        <dbReference type="ChEBI" id="CHEBI:59789"/>
        <dbReference type="ChEBI" id="CHEBI:64428"/>
        <dbReference type="ChEBI" id="CHEBI:149473"/>
        <dbReference type="EC" id="2.8.1.6"/>
    </reaction>
</comment>
<comment type="cofactor">
    <cofactor evidence="1">
        <name>[4Fe-4S] cluster</name>
        <dbReference type="ChEBI" id="CHEBI:49883"/>
    </cofactor>
    <text evidence="1">Binds 1 [4Fe-4S] cluster. The cluster is coordinated with 3 cysteines and an exchangeable S-adenosyl-L-methionine.</text>
</comment>
<comment type="cofactor">
    <cofactor evidence="1">
        <name>[2Fe-2S] cluster</name>
        <dbReference type="ChEBI" id="CHEBI:190135"/>
    </cofactor>
    <text evidence="1">Binds 1 [2Fe-2S] cluster. The cluster is coordinated with 3 cysteines and 1 arginine.</text>
</comment>
<comment type="pathway">
    <text evidence="1">Cofactor biosynthesis; biotin biosynthesis; biotin from 7,8-diaminononanoate: step 2/2.</text>
</comment>
<comment type="subunit">
    <text evidence="1">Homodimer.</text>
</comment>
<comment type="similarity">
    <text evidence="1">Belongs to the radical SAM superfamily. Biotin synthase family.</text>
</comment>
<protein>
    <recommendedName>
        <fullName evidence="1">Biotin synthase</fullName>
        <ecNumber evidence="1">2.8.1.6</ecNumber>
    </recommendedName>
</protein>
<reference key="1">
    <citation type="journal article" date="1989" name="Gene">
        <title>Cloning of the biotin synthetase gene from Bacillus sphaericus and expression in Escherichia coli and Bacilli.</title>
        <authorList>
            <person name="Ohsawa I."/>
            <person name="Speck D."/>
            <person name="Kisou T."/>
            <person name="Hayakawa K."/>
            <person name="Zinsius M."/>
            <person name="Gloeckler R."/>
            <person name="Lemoine Y."/>
            <person name="Kamogawa K."/>
        </authorList>
    </citation>
    <scope>NUCLEOTIDE SEQUENCE [GENOMIC DNA]</scope>
    <scope>PARTIAL PROTEIN SEQUENCE</scope>
    <source>
        <strain>T-178-367</strain>
    </source>
</reference>
<reference key="2">
    <citation type="journal article" date="1990" name="Gene">
        <title>Cloning and characterization of the Bacillus sphaericus genes controlling the bioconversion of pimelate into dethiobiotin.</title>
        <authorList>
            <person name="Gloeckler R."/>
            <person name="Ohsawa I."/>
            <person name="Speck D."/>
            <person name="Ledoux C."/>
            <person name="Bernard S."/>
            <person name="Zinsius M."/>
            <person name="Villeval D."/>
            <person name="Kisou T."/>
            <person name="Kamogawa K."/>
            <person name="Lemoine Y."/>
        </authorList>
    </citation>
    <scope>NUCLEOTIDE SEQUENCE [GENOMIC DNA]</scope>
</reference>
<proteinExistence type="evidence at protein level"/>
<sequence>MNWLQLADEVIAGKVISDDEALAILNSDDDDILKLMDGAFAIRKHYYGKKVKLNMIMNAKSGYCPEDCGYCSQSSKSTAPIEKYPFITKEEILAGAKRAFENKIGTYCIVASGRGPTRKDVNVVSEAVEEIKAKYGLKVCACLGLLKEEQAQQLKEAGVDRYNHNLNTSERHHSYITTTHTYEDRVNTVEVVKKHGISPCSGAIIGMKETKMDVVEIARALHQLDADSIPVNFLHAIDGTKLEGTQDLNPRYCLKVLALFRYMNPSKEIRISGGREVNLGFLQPFGLYAANSIFVGDYLTTEGQEANSDYRMLEDLGFEIELTQKQEEAFCS</sequence>
<name>BIOB_LYSSH</name>
<organism>
    <name type="scientific">Lysinibacillus sphaericus</name>
    <name type="common">Bacillus sphaericus</name>
    <dbReference type="NCBI Taxonomy" id="1421"/>
    <lineage>
        <taxon>Bacteria</taxon>
        <taxon>Bacillati</taxon>
        <taxon>Bacillota</taxon>
        <taxon>Bacilli</taxon>
        <taxon>Bacillales</taxon>
        <taxon>Bacillaceae</taxon>
        <taxon>Lysinibacillus</taxon>
    </lineage>
</organism>
<dbReference type="EC" id="2.8.1.6" evidence="1"/>
<dbReference type="EMBL" id="M27867">
    <property type="protein sequence ID" value="AAA22268.1"/>
    <property type="molecule type" value="Genomic_DNA"/>
</dbReference>
<dbReference type="EMBL" id="M29292">
    <property type="protein sequence ID" value="AAB02327.1"/>
    <property type="molecule type" value="Genomic_DNA"/>
</dbReference>
<dbReference type="PIR" id="JS0274">
    <property type="entry name" value="JS0274"/>
</dbReference>
<dbReference type="RefSeq" id="WP_024361129.1">
    <property type="nucleotide sequence ID" value="NZ_UFSZ01000001.1"/>
</dbReference>
<dbReference type="SMR" id="P19206"/>
<dbReference type="STRING" id="1421.A2J09_09950"/>
<dbReference type="GeneID" id="48276410"/>
<dbReference type="UniPathway" id="UPA00078">
    <property type="reaction ID" value="UER00162"/>
</dbReference>
<dbReference type="GO" id="GO:0051537">
    <property type="term" value="F:2 iron, 2 sulfur cluster binding"/>
    <property type="evidence" value="ECO:0007669"/>
    <property type="project" value="UniProtKB-KW"/>
</dbReference>
<dbReference type="GO" id="GO:0051539">
    <property type="term" value="F:4 iron, 4 sulfur cluster binding"/>
    <property type="evidence" value="ECO:0007669"/>
    <property type="project" value="UniProtKB-KW"/>
</dbReference>
<dbReference type="GO" id="GO:0004076">
    <property type="term" value="F:biotin synthase activity"/>
    <property type="evidence" value="ECO:0007669"/>
    <property type="project" value="UniProtKB-UniRule"/>
</dbReference>
<dbReference type="GO" id="GO:0005506">
    <property type="term" value="F:iron ion binding"/>
    <property type="evidence" value="ECO:0007669"/>
    <property type="project" value="UniProtKB-UniRule"/>
</dbReference>
<dbReference type="GO" id="GO:0009102">
    <property type="term" value="P:biotin biosynthetic process"/>
    <property type="evidence" value="ECO:0007669"/>
    <property type="project" value="UniProtKB-UniRule"/>
</dbReference>
<dbReference type="CDD" id="cd01335">
    <property type="entry name" value="Radical_SAM"/>
    <property type="match status" value="1"/>
</dbReference>
<dbReference type="FunFam" id="3.20.20.70:FF:000026">
    <property type="entry name" value="Biotin synthase"/>
    <property type="match status" value="1"/>
</dbReference>
<dbReference type="Gene3D" id="3.20.20.70">
    <property type="entry name" value="Aldolase class I"/>
    <property type="match status" value="1"/>
</dbReference>
<dbReference type="HAMAP" id="MF_01694">
    <property type="entry name" value="BioB"/>
    <property type="match status" value="1"/>
</dbReference>
<dbReference type="InterPro" id="IPR013785">
    <property type="entry name" value="Aldolase_TIM"/>
</dbReference>
<dbReference type="InterPro" id="IPR010722">
    <property type="entry name" value="BATS_dom"/>
</dbReference>
<dbReference type="InterPro" id="IPR002684">
    <property type="entry name" value="Biotin_synth/BioAB"/>
</dbReference>
<dbReference type="InterPro" id="IPR024177">
    <property type="entry name" value="Biotin_synthase"/>
</dbReference>
<dbReference type="InterPro" id="IPR006638">
    <property type="entry name" value="Elp3/MiaA/NifB-like_rSAM"/>
</dbReference>
<dbReference type="InterPro" id="IPR007197">
    <property type="entry name" value="rSAM"/>
</dbReference>
<dbReference type="NCBIfam" id="TIGR00433">
    <property type="entry name" value="bioB"/>
    <property type="match status" value="1"/>
</dbReference>
<dbReference type="PANTHER" id="PTHR22976">
    <property type="entry name" value="BIOTIN SYNTHASE"/>
    <property type="match status" value="1"/>
</dbReference>
<dbReference type="PANTHER" id="PTHR22976:SF2">
    <property type="entry name" value="BIOTIN SYNTHASE, MITOCHONDRIAL"/>
    <property type="match status" value="1"/>
</dbReference>
<dbReference type="Pfam" id="PF06968">
    <property type="entry name" value="BATS"/>
    <property type="match status" value="1"/>
</dbReference>
<dbReference type="Pfam" id="PF04055">
    <property type="entry name" value="Radical_SAM"/>
    <property type="match status" value="1"/>
</dbReference>
<dbReference type="PIRSF" id="PIRSF001619">
    <property type="entry name" value="Biotin_synth"/>
    <property type="match status" value="1"/>
</dbReference>
<dbReference type="SFLD" id="SFLDG01060">
    <property type="entry name" value="BATS_domain_containing"/>
    <property type="match status" value="1"/>
</dbReference>
<dbReference type="SFLD" id="SFLDG01278">
    <property type="entry name" value="biotin_synthase_like"/>
    <property type="match status" value="1"/>
</dbReference>
<dbReference type="SMART" id="SM00876">
    <property type="entry name" value="BATS"/>
    <property type="match status" value="1"/>
</dbReference>
<dbReference type="SMART" id="SM00729">
    <property type="entry name" value="Elp3"/>
    <property type="match status" value="1"/>
</dbReference>
<dbReference type="SUPFAM" id="SSF102114">
    <property type="entry name" value="Radical SAM enzymes"/>
    <property type="match status" value="1"/>
</dbReference>
<dbReference type="PROSITE" id="PS51918">
    <property type="entry name" value="RADICAL_SAM"/>
    <property type="match status" value="1"/>
</dbReference>
<keyword id="KW-0001">2Fe-2S</keyword>
<keyword id="KW-0004">4Fe-4S</keyword>
<keyword id="KW-0093">Biotin biosynthesis</keyword>
<keyword id="KW-0903">Direct protein sequencing</keyword>
<keyword id="KW-0408">Iron</keyword>
<keyword id="KW-0411">Iron-sulfur</keyword>
<keyword id="KW-0479">Metal-binding</keyword>
<keyword id="KW-0949">S-adenosyl-L-methionine</keyword>
<keyword id="KW-0808">Transferase</keyword>